<reference key="1">
    <citation type="journal article" date="2003" name="Science">
        <title>Role of mobile DNA in the evolution of vancomycin-resistant Enterococcus faecalis.</title>
        <authorList>
            <person name="Paulsen I.T."/>
            <person name="Banerjei L."/>
            <person name="Myers G.S.A."/>
            <person name="Nelson K.E."/>
            <person name="Seshadri R."/>
            <person name="Read T.D."/>
            <person name="Fouts D.E."/>
            <person name="Eisen J.A."/>
            <person name="Gill S.R."/>
            <person name="Heidelberg J.F."/>
            <person name="Tettelin H."/>
            <person name="Dodson R.J."/>
            <person name="Umayam L.A."/>
            <person name="Brinkac L.M."/>
            <person name="Beanan M.J."/>
            <person name="Daugherty S.C."/>
            <person name="DeBoy R.T."/>
            <person name="Durkin S.A."/>
            <person name="Kolonay J.F."/>
            <person name="Madupu R."/>
            <person name="Nelson W.C."/>
            <person name="Vamathevan J.J."/>
            <person name="Tran B."/>
            <person name="Upton J."/>
            <person name="Hansen T."/>
            <person name="Shetty J."/>
            <person name="Khouri H.M."/>
            <person name="Utterback T.R."/>
            <person name="Radune D."/>
            <person name="Ketchum K.A."/>
            <person name="Dougherty B.A."/>
            <person name="Fraser C.M."/>
        </authorList>
    </citation>
    <scope>NUCLEOTIDE SEQUENCE [LARGE SCALE GENOMIC DNA]</scope>
    <source>
        <strain>ATCC 700802 / V583</strain>
    </source>
</reference>
<gene>
    <name evidence="1" type="primary">ung</name>
    <name type="ordered locus">EF_0948</name>
</gene>
<name>UNG_ENTFA</name>
<keyword id="KW-0963">Cytoplasm</keyword>
<keyword id="KW-0227">DNA damage</keyword>
<keyword id="KW-0234">DNA repair</keyword>
<keyword id="KW-0378">Hydrolase</keyword>
<keyword id="KW-1185">Reference proteome</keyword>
<proteinExistence type="inferred from homology"/>
<accession>Q836Z5</accession>
<organism>
    <name type="scientific">Enterococcus faecalis (strain ATCC 700802 / V583)</name>
    <dbReference type="NCBI Taxonomy" id="226185"/>
    <lineage>
        <taxon>Bacteria</taxon>
        <taxon>Bacillati</taxon>
        <taxon>Bacillota</taxon>
        <taxon>Bacilli</taxon>
        <taxon>Lactobacillales</taxon>
        <taxon>Enterococcaceae</taxon>
        <taxon>Enterococcus</taxon>
    </lineage>
</organism>
<comment type="function">
    <text evidence="1">Excises uracil residues from the DNA which can arise as a result of misincorporation of dUMP residues by DNA polymerase or due to deamination of cytosine.</text>
</comment>
<comment type="catalytic activity">
    <reaction evidence="1">
        <text>Hydrolyzes single-stranded DNA or mismatched double-stranded DNA and polynucleotides, releasing free uracil.</text>
        <dbReference type="EC" id="3.2.2.27"/>
    </reaction>
</comment>
<comment type="subcellular location">
    <subcellularLocation>
        <location evidence="1">Cytoplasm</location>
    </subcellularLocation>
</comment>
<comment type="similarity">
    <text evidence="1">Belongs to the uracil-DNA glycosylase (UDG) superfamily. UNG family.</text>
</comment>
<sequence length="226" mass="25887">MKEIIHNSWQNILSAEFEKPYYQELREFLKKEYQTQTIYPDMYHLFSALELTPFEEVKVVILGQDPYHGPNQAHGLSFSVQPGVKVPPSLANIYKELQADLGYQPVNHGFLESWAKQGVLLLNTVLTVRAGQAYSHRGKGWEQLTDVIIEKLNEREKPVVFILWGRPAQEKIKMIDTTRHVIIKSPHPSPLSAHRGFFGSRPFSQANAALERLGETPIDWQLPETV</sequence>
<evidence type="ECO:0000255" key="1">
    <source>
        <dbReference type="HAMAP-Rule" id="MF_00148"/>
    </source>
</evidence>
<feature type="chain" id="PRO_0000176094" description="Uracil-DNA glycosylase">
    <location>
        <begin position="1"/>
        <end position="226"/>
    </location>
</feature>
<feature type="active site" description="Proton acceptor" evidence="1">
    <location>
        <position position="65"/>
    </location>
</feature>
<protein>
    <recommendedName>
        <fullName evidence="1">Uracil-DNA glycosylase</fullName>
        <shortName evidence="1">UDG</shortName>
        <ecNumber evidence="1">3.2.2.27</ecNumber>
    </recommendedName>
</protein>
<dbReference type="EC" id="3.2.2.27" evidence="1"/>
<dbReference type="EMBL" id="AE016830">
    <property type="protein sequence ID" value="AAO80756.1"/>
    <property type="molecule type" value="Genomic_DNA"/>
</dbReference>
<dbReference type="RefSeq" id="NP_814686.1">
    <property type="nucleotide sequence ID" value="NC_004668.1"/>
</dbReference>
<dbReference type="RefSeq" id="WP_002387025.1">
    <property type="nucleotide sequence ID" value="NZ_KE136527.1"/>
</dbReference>
<dbReference type="SMR" id="Q836Z5"/>
<dbReference type="STRING" id="226185.EF_0948"/>
<dbReference type="EnsemblBacteria" id="AAO80756">
    <property type="protein sequence ID" value="AAO80756"/>
    <property type="gene ID" value="EF_0948"/>
</dbReference>
<dbReference type="KEGG" id="efa:EF0948"/>
<dbReference type="PATRIC" id="fig|226185.45.peg.3156"/>
<dbReference type="eggNOG" id="COG0692">
    <property type="taxonomic scope" value="Bacteria"/>
</dbReference>
<dbReference type="HOGENOM" id="CLU_032162_3_1_9"/>
<dbReference type="Proteomes" id="UP000001415">
    <property type="component" value="Chromosome"/>
</dbReference>
<dbReference type="GO" id="GO:0005737">
    <property type="term" value="C:cytoplasm"/>
    <property type="evidence" value="ECO:0007669"/>
    <property type="project" value="UniProtKB-SubCell"/>
</dbReference>
<dbReference type="GO" id="GO:0004844">
    <property type="term" value="F:uracil DNA N-glycosylase activity"/>
    <property type="evidence" value="ECO:0007669"/>
    <property type="project" value="UniProtKB-UniRule"/>
</dbReference>
<dbReference type="GO" id="GO:0097510">
    <property type="term" value="P:base-excision repair, AP site formation via deaminated base removal"/>
    <property type="evidence" value="ECO:0007669"/>
    <property type="project" value="TreeGrafter"/>
</dbReference>
<dbReference type="CDD" id="cd10027">
    <property type="entry name" value="UDG-F1-like"/>
    <property type="match status" value="1"/>
</dbReference>
<dbReference type="FunFam" id="3.40.470.10:FF:000001">
    <property type="entry name" value="Uracil-DNA glycosylase"/>
    <property type="match status" value="1"/>
</dbReference>
<dbReference type="Gene3D" id="3.40.470.10">
    <property type="entry name" value="Uracil-DNA glycosylase-like domain"/>
    <property type="match status" value="1"/>
</dbReference>
<dbReference type="HAMAP" id="MF_00148">
    <property type="entry name" value="UDG"/>
    <property type="match status" value="1"/>
</dbReference>
<dbReference type="InterPro" id="IPR002043">
    <property type="entry name" value="UDG_fam1"/>
</dbReference>
<dbReference type="InterPro" id="IPR018085">
    <property type="entry name" value="Ura-DNA_Glyclase_AS"/>
</dbReference>
<dbReference type="InterPro" id="IPR005122">
    <property type="entry name" value="Uracil-DNA_glycosylase-like"/>
</dbReference>
<dbReference type="InterPro" id="IPR036895">
    <property type="entry name" value="Uracil-DNA_glycosylase-like_sf"/>
</dbReference>
<dbReference type="NCBIfam" id="NF003588">
    <property type="entry name" value="PRK05254.1-1"/>
    <property type="match status" value="1"/>
</dbReference>
<dbReference type="NCBIfam" id="NF003589">
    <property type="entry name" value="PRK05254.1-2"/>
    <property type="match status" value="1"/>
</dbReference>
<dbReference type="NCBIfam" id="NF003591">
    <property type="entry name" value="PRK05254.1-4"/>
    <property type="match status" value="1"/>
</dbReference>
<dbReference type="NCBIfam" id="NF003592">
    <property type="entry name" value="PRK05254.1-5"/>
    <property type="match status" value="1"/>
</dbReference>
<dbReference type="NCBIfam" id="TIGR00628">
    <property type="entry name" value="ung"/>
    <property type="match status" value="1"/>
</dbReference>
<dbReference type="PANTHER" id="PTHR11264">
    <property type="entry name" value="URACIL-DNA GLYCOSYLASE"/>
    <property type="match status" value="1"/>
</dbReference>
<dbReference type="PANTHER" id="PTHR11264:SF0">
    <property type="entry name" value="URACIL-DNA GLYCOSYLASE"/>
    <property type="match status" value="1"/>
</dbReference>
<dbReference type="Pfam" id="PF03167">
    <property type="entry name" value="UDG"/>
    <property type="match status" value="1"/>
</dbReference>
<dbReference type="SMART" id="SM00986">
    <property type="entry name" value="UDG"/>
    <property type="match status" value="1"/>
</dbReference>
<dbReference type="SMART" id="SM00987">
    <property type="entry name" value="UreE_C"/>
    <property type="match status" value="1"/>
</dbReference>
<dbReference type="SUPFAM" id="SSF52141">
    <property type="entry name" value="Uracil-DNA glycosylase-like"/>
    <property type="match status" value="1"/>
</dbReference>
<dbReference type="PROSITE" id="PS00130">
    <property type="entry name" value="U_DNA_GLYCOSYLASE"/>
    <property type="match status" value="1"/>
</dbReference>